<comment type="function">
    <text evidence="1">Negatively regulates transcription of bacterial ribonucleotide reductase nrd genes and operons by binding to NrdR-boxes.</text>
</comment>
<comment type="cofactor">
    <cofactor evidence="1">
        <name>Zn(2+)</name>
        <dbReference type="ChEBI" id="CHEBI:29105"/>
    </cofactor>
    <text evidence="1">Binds 1 zinc ion.</text>
</comment>
<comment type="similarity">
    <text evidence="1">Belongs to the NrdR family.</text>
</comment>
<feature type="chain" id="PRO_1000124460" description="Transcriptional repressor NrdR">
    <location>
        <begin position="1"/>
        <end position="149"/>
    </location>
</feature>
<feature type="domain" description="ATP-cone" evidence="1">
    <location>
        <begin position="49"/>
        <end position="139"/>
    </location>
</feature>
<feature type="zinc finger region" evidence="1">
    <location>
        <begin position="3"/>
        <end position="34"/>
    </location>
</feature>
<sequence length="149" mass="16950">MRCPFCAAEETKVVDSRLAADGYQIRRRRECTSCKERFTTFESAELVVPYVIKNNGNRVPSDANKLRVSLSRALEKRPVSADDLEKAISKIIIQLQSTGEREVPSKLVGSLAMDALKQLDKVAYIRFASVYLSFDDIEEFTKEIEKLRE</sequence>
<reference key="1">
    <citation type="journal article" date="2008" name="PLoS ONE">
        <title>Genome biology of Actinobacillus pleuropneumoniae JL03, an isolate of serotype 3 prevalent in China.</title>
        <authorList>
            <person name="Xu Z."/>
            <person name="Zhou Y."/>
            <person name="Li L."/>
            <person name="Zhou R."/>
            <person name="Xiao S."/>
            <person name="Wan Y."/>
            <person name="Zhang S."/>
            <person name="Wang K."/>
            <person name="Li W."/>
            <person name="Li L."/>
            <person name="Jin H."/>
            <person name="Kang M."/>
            <person name="Dalai B."/>
            <person name="Li T."/>
            <person name="Liu L."/>
            <person name="Cheng Y."/>
            <person name="Zhang L."/>
            <person name="Xu T."/>
            <person name="Zheng H."/>
            <person name="Pu S."/>
            <person name="Wang B."/>
            <person name="Gu W."/>
            <person name="Zhang X.L."/>
            <person name="Zhu G.-F."/>
            <person name="Wang S."/>
            <person name="Zhao G.-P."/>
            <person name="Chen H."/>
        </authorList>
    </citation>
    <scope>NUCLEOTIDE SEQUENCE [LARGE SCALE GENOMIC DNA]</scope>
    <source>
        <strain>JL03</strain>
    </source>
</reference>
<name>NRDR_ACTPJ</name>
<proteinExistence type="inferred from homology"/>
<keyword id="KW-0067">ATP-binding</keyword>
<keyword id="KW-0238">DNA-binding</keyword>
<keyword id="KW-0479">Metal-binding</keyword>
<keyword id="KW-0547">Nucleotide-binding</keyword>
<keyword id="KW-0678">Repressor</keyword>
<keyword id="KW-0804">Transcription</keyword>
<keyword id="KW-0805">Transcription regulation</keyword>
<keyword id="KW-0862">Zinc</keyword>
<keyword id="KW-0863">Zinc-finger</keyword>
<evidence type="ECO:0000255" key="1">
    <source>
        <dbReference type="HAMAP-Rule" id="MF_00440"/>
    </source>
</evidence>
<gene>
    <name evidence="1" type="primary">nrdR</name>
    <name type="ordered locus">APJL_0711</name>
</gene>
<dbReference type="EMBL" id="CP000687">
    <property type="protein sequence ID" value="ABY69276.1"/>
    <property type="molecule type" value="Genomic_DNA"/>
</dbReference>
<dbReference type="RefSeq" id="WP_012262930.1">
    <property type="nucleotide sequence ID" value="NC_010278.1"/>
</dbReference>
<dbReference type="SMR" id="B0BNZ1"/>
<dbReference type="KEGG" id="apj:APJL_0711"/>
<dbReference type="HOGENOM" id="CLU_108412_0_0_6"/>
<dbReference type="Proteomes" id="UP000008547">
    <property type="component" value="Chromosome"/>
</dbReference>
<dbReference type="GO" id="GO:0005524">
    <property type="term" value="F:ATP binding"/>
    <property type="evidence" value="ECO:0007669"/>
    <property type="project" value="UniProtKB-KW"/>
</dbReference>
<dbReference type="GO" id="GO:0003677">
    <property type="term" value="F:DNA binding"/>
    <property type="evidence" value="ECO:0007669"/>
    <property type="project" value="UniProtKB-KW"/>
</dbReference>
<dbReference type="GO" id="GO:0008270">
    <property type="term" value="F:zinc ion binding"/>
    <property type="evidence" value="ECO:0007669"/>
    <property type="project" value="UniProtKB-UniRule"/>
</dbReference>
<dbReference type="GO" id="GO:0045892">
    <property type="term" value="P:negative regulation of DNA-templated transcription"/>
    <property type="evidence" value="ECO:0007669"/>
    <property type="project" value="UniProtKB-UniRule"/>
</dbReference>
<dbReference type="HAMAP" id="MF_00440">
    <property type="entry name" value="NrdR"/>
    <property type="match status" value="1"/>
</dbReference>
<dbReference type="InterPro" id="IPR005144">
    <property type="entry name" value="ATP-cone_dom"/>
</dbReference>
<dbReference type="InterPro" id="IPR055173">
    <property type="entry name" value="NrdR-like_N"/>
</dbReference>
<dbReference type="InterPro" id="IPR003796">
    <property type="entry name" value="RNR_NrdR-like"/>
</dbReference>
<dbReference type="NCBIfam" id="TIGR00244">
    <property type="entry name" value="transcriptional regulator NrdR"/>
    <property type="match status" value="1"/>
</dbReference>
<dbReference type="PANTHER" id="PTHR30455">
    <property type="entry name" value="TRANSCRIPTIONAL REPRESSOR NRDR"/>
    <property type="match status" value="1"/>
</dbReference>
<dbReference type="PANTHER" id="PTHR30455:SF2">
    <property type="entry name" value="TRANSCRIPTIONAL REPRESSOR NRDR"/>
    <property type="match status" value="1"/>
</dbReference>
<dbReference type="Pfam" id="PF03477">
    <property type="entry name" value="ATP-cone"/>
    <property type="match status" value="1"/>
</dbReference>
<dbReference type="Pfam" id="PF22811">
    <property type="entry name" value="Zn_ribbon_NrdR"/>
    <property type="match status" value="1"/>
</dbReference>
<dbReference type="PROSITE" id="PS51161">
    <property type="entry name" value="ATP_CONE"/>
    <property type="match status" value="1"/>
</dbReference>
<accession>B0BNZ1</accession>
<protein>
    <recommendedName>
        <fullName evidence="1">Transcriptional repressor NrdR</fullName>
    </recommendedName>
</protein>
<organism>
    <name type="scientific">Actinobacillus pleuropneumoniae serotype 3 (strain JL03)</name>
    <dbReference type="NCBI Taxonomy" id="434271"/>
    <lineage>
        <taxon>Bacteria</taxon>
        <taxon>Pseudomonadati</taxon>
        <taxon>Pseudomonadota</taxon>
        <taxon>Gammaproteobacteria</taxon>
        <taxon>Pasteurellales</taxon>
        <taxon>Pasteurellaceae</taxon>
        <taxon>Actinobacillus</taxon>
    </lineage>
</organism>